<sequence>MSRIGNKVITLPAGVEVTNKDNVVTVKGPKGELTREFPKVIEIKIEGTEVTLHRPNDSKEMKTIHGTARANLNNMVIGVSEGFKKELEMRGVGYRAQLQGKKLVLSVGKSHPDEVEAPEGITFEVPTATAIVVNGINKEVVGQTAAYIRGLRVPEPYKGKGIRYAGEYVRRKEGKTGK</sequence>
<dbReference type="EMBL" id="AE014133">
    <property type="protein sequence ID" value="AAN59615.1"/>
    <property type="molecule type" value="Genomic_DNA"/>
</dbReference>
<dbReference type="RefSeq" id="NP_722309.1">
    <property type="nucleotide sequence ID" value="NC_004350.2"/>
</dbReference>
<dbReference type="RefSeq" id="WP_002262325.1">
    <property type="nucleotide sequence ID" value="NC_004350.2"/>
</dbReference>
<dbReference type="SMR" id="Q8DS28"/>
<dbReference type="STRING" id="210007.SMU_2011"/>
<dbReference type="GeneID" id="93860214"/>
<dbReference type="KEGG" id="smu:SMU_2011"/>
<dbReference type="PATRIC" id="fig|210007.7.peg.1792"/>
<dbReference type="eggNOG" id="COG0097">
    <property type="taxonomic scope" value="Bacteria"/>
</dbReference>
<dbReference type="HOGENOM" id="CLU_065464_1_2_9"/>
<dbReference type="OrthoDB" id="9805007at2"/>
<dbReference type="PhylomeDB" id="Q8DS28"/>
<dbReference type="Proteomes" id="UP000002512">
    <property type="component" value="Chromosome"/>
</dbReference>
<dbReference type="GO" id="GO:0022625">
    <property type="term" value="C:cytosolic large ribosomal subunit"/>
    <property type="evidence" value="ECO:0007669"/>
    <property type="project" value="TreeGrafter"/>
</dbReference>
<dbReference type="GO" id="GO:0019843">
    <property type="term" value="F:rRNA binding"/>
    <property type="evidence" value="ECO:0007669"/>
    <property type="project" value="UniProtKB-UniRule"/>
</dbReference>
<dbReference type="GO" id="GO:0003735">
    <property type="term" value="F:structural constituent of ribosome"/>
    <property type="evidence" value="ECO:0007669"/>
    <property type="project" value="InterPro"/>
</dbReference>
<dbReference type="GO" id="GO:0002181">
    <property type="term" value="P:cytoplasmic translation"/>
    <property type="evidence" value="ECO:0007669"/>
    <property type="project" value="TreeGrafter"/>
</dbReference>
<dbReference type="FunFam" id="3.90.930.12:FF:000001">
    <property type="entry name" value="50S ribosomal protein L6"/>
    <property type="match status" value="1"/>
</dbReference>
<dbReference type="FunFam" id="3.90.930.12:FF:000002">
    <property type="entry name" value="50S ribosomal protein L6"/>
    <property type="match status" value="1"/>
</dbReference>
<dbReference type="Gene3D" id="3.90.930.12">
    <property type="entry name" value="Ribosomal protein L6, alpha-beta domain"/>
    <property type="match status" value="2"/>
</dbReference>
<dbReference type="HAMAP" id="MF_01365_B">
    <property type="entry name" value="Ribosomal_uL6_B"/>
    <property type="match status" value="1"/>
</dbReference>
<dbReference type="InterPro" id="IPR000702">
    <property type="entry name" value="Ribosomal_uL6-like"/>
</dbReference>
<dbReference type="InterPro" id="IPR036789">
    <property type="entry name" value="Ribosomal_uL6-like_a/b-dom_sf"/>
</dbReference>
<dbReference type="InterPro" id="IPR020040">
    <property type="entry name" value="Ribosomal_uL6_a/b-dom"/>
</dbReference>
<dbReference type="InterPro" id="IPR019906">
    <property type="entry name" value="Ribosomal_uL6_bac-type"/>
</dbReference>
<dbReference type="InterPro" id="IPR002358">
    <property type="entry name" value="Ribosomal_uL6_CS"/>
</dbReference>
<dbReference type="NCBIfam" id="TIGR03654">
    <property type="entry name" value="L6_bact"/>
    <property type="match status" value="1"/>
</dbReference>
<dbReference type="PANTHER" id="PTHR11655">
    <property type="entry name" value="60S/50S RIBOSOMAL PROTEIN L6/L9"/>
    <property type="match status" value="1"/>
</dbReference>
<dbReference type="PANTHER" id="PTHR11655:SF14">
    <property type="entry name" value="LARGE RIBOSOMAL SUBUNIT PROTEIN UL6M"/>
    <property type="match status" value="1"/>
</dbReference>
<dbReference type="Pfam" id="PF00347">
    <property type="entry name" value="Ribosomal_L6"/>
    <property type="match status" value="2"/>
</dbReference>
<dbReference type="PIRSF" id="PIRSF002162">
    <property type="entry name" value="Ribosomal_L6"/>
    <property type="match status" value="1"/>
</dbReference>
<dbReference type="PRINTS" id="PR00059">
    <property type="entry name" value="RIBOSOMALL6"/>
</dbReference>
<dbReference type="SUPFAM" id="SSF56053">
    <property type="entry name" value="Ribosomal protein L6"/>
    <property type="match status" value="2"/>
</dbReference>
<dbReference type="PROSITE" id="PS00525">
    <property type="entry name" value="RIBOSOMAL_L6_1"/>
    <property type="match status" value="1"/>
</dbReference>
<proteinExistence type="inferred from homology"/>
<protein>
    <recommendedName>
        <fullName evidence="1">Large ribosomal subunit protein uL6</fullName>
    </recommendedName>
    <alternativeName>
        <fullName evidence="2">50S ribosomal protein L6</fullName>
    </alternativeName>
</protein>
<evidence type="ECO:0000255" key="1">
    <source>
        <dbReference type="HAMAP-Rule" id="MF_01365"/>
    </source>
</evidence>
<evidence type="ECO:0000305" key="2"/>
<keyword id="KW-1185">Reference proteome</keyword>
<keyword id="KW-0687">Ribonucleoprotein</keyword>
<keyword id="KW-0689">Ribosomal protein</keyword>
<keyword id="KW-0694">RNA-binding</keyword>
<keyword id="KW-0699">rRNA-binding</keyword>
<accession>Q8DS28</accession>
<feature type="chain" id="PRO_0000260943" description="Large ribosomal subunit protein uL6">
    <location>
        <begin position="1"/>
        <end position="178"/>
    </location>
</feature>
<name>RL6_STRMU</name>
<gene>
    <name evidence="1" type="primary">rplF</name>
    <name type="ordered locus">SMU_2011</name>
</gene>
<reference key="1">
    <citation type="journal article" date="2002" name="Proc. Natl. Acad. Sci. U.S.A.">
        <title>Genome sequence of Streptococcus mutans UA159, a cariogenic dental pathogen.</title>
        <authorList>
            <person name="Ajdic D.J."/>
            <person name="McShan W.M."/>
            <person name="McLaughlin R.E."/>
            <person name="Savic G."/>
            <person name="Chang J."/>
            <person name="Carson M.B."/>
            <person name="Primeaux C."/>
            <person name="Tian R."/>
            <person name="Kenton S."/>
            <person name="Jia H.G."/>
            <person name="Lin S.P."/>
            <person name="Qian Y."/>
            <person name="Li S."/>
            <person name="Zhu H."/>
            <person name="Najar F.Z."/>
            <person name="Lai H."/>
            <person name="White J."/>
            <person name="Roe B.A."/>
            <person name="Ferretti J.J."/>
        </authorList>
    </citation>
    <scope>NUCLEOTIDE SEQUENCE [LARGE SCALE GENOMIC DNA]</scope>
    <source>
        <strain>ATCC 700610 / UA159</strain>
    </source>
</reference>
<organism>
    <name type="scientific">Streptococcus mutans serotype c (strain ATCC 700610 / UA159)</name>
    <dbReference type="NCBI Taxonomy" id="210007"/>
    <lineage>
        <taxon>Bacteria</taxon>
        <taxon>Bacillati</taxon>
        <taxon>Bacillota</taxon>
        <taxon>Bacilli</taxon>
        <taxon>Lactobacillales</taxon>
        <taxon>Streptococcaceae</taxon>
        <taxon>Streptococcus</taxon>
    </lineage>
</organism>
<comment type="function">
    <text evidence="1">This protein binds to the 23S rRNA, and is important in its secondary structure. It is located near the subunit interface in the base of the L7/L12 stalk, and near the tRNA binding site of the peptidyltransferase center.</text>
</comment>
<comment type="subunit">
    <text evidence="1">Part of the 50S ribosomal subunit.</text>
</comment>
<comment type="similarity">
    <text evidence="1">Belongs to the universal ribosomal protein uL6 family.</text>
</comment>